<dbReference type="EC" id="2.4.1.207" evidence="7"/>
<dbReference type="EC" id="3.2.1.151" evidence="7"/>
<dbReference type="EMBL" id="X92975">
    <property type="protein sequence ID" value="CAA63553.1"/>
    <property type="molecule type" value="mRNA"/>
</dbReference>
<dbReference type="EMBL" id="AL353992">
    <property type="protein sequence ID" value="CAB89314.1"/>
    <property type="molecule type" value="Genomic_DNA"/>
</dbReference>
<dbReference type="EMBL" id="CP002686">
    <property type="protein sequence ID" value="AEE77976.1"/>
    <property type="molecule type" value="Genomic_DNA"/>
</dbReference>
<dbReference type="EMBL" id="AY056163">
    <property type="protein sequence ID" value="AAL07012.1"/>
    <property type="molecule type" value="mRNA"/>
</dbReference>
<dbReference type="EMBL" id="AY136454">
    <property type="protein sequence ID" value="AAM97119.1"/>
    <property type="molecule type" value="mRNA"/>
</dbReference>
<dbReference type="EMBL" id="BT006326">
    <property type="protein sequence ID" value="AAP13434.1"/>
    <property type="molecule type" value="mRNA"/>
</dbReference>
<dbReference type="PIR" id="T48975">
    <property type="entry name" value="T48975"/>
</dbReference>
<dbReference type="RefSeq" id="NP_190085.1">
    <property type="nucleotide sequence ID" value="NM_114368.3"/>
</dbReference>
<dbReference type="SMR" id="P93046"/>
<dbReference type="BioGRID" id="8954">
    <property type="interactions" value="1"/>
</dbReference>
<dbReference type="STRING" id="3702.P93046"/>
<dbReference type="CAZy" id="GH16">
    <property type="family name" value="Glycoside Hydrolase Family 16"/>
</dbReference>
<dbReference type="PaxDb" id="3702-AT3G44990.1"/>
<dbReference type="ProteomicsDB" id="243029"/>
<dbReference type="EnsemblPlants" id="AT3G44990.1">
    <property type="protein sequence ID" value="AT3G44990.1"/>
    <property type="gene ID" value="AT3G44990"/>
</dbReference>
<dbReference type="GeneID" id="823634"/>
<dbReference type="Gramene" id="AT3G44990.1">
    <property type="protein sequence ID" value="AT3G44990.1"/>
    <property type="gene ID" value="AT3G44990"/>
</dbReference>
<dbReference type="KEGG" id="ath:AT3G44990"/>
<dbReference type="Araport" id="AT3G44990"/>
<dbReference type="TAIR" id="AT3G44990">
    <property type="gene designation" value="XTH31"/>
</dbReference>
<dbReference type="eggNOG" id="ENOG502QQC7">
    <property type="taxonomic scope" value="Eukaryota"/>
</dbReference>
<dbReference type="HOGENOM" id="CLU_048041_1_1_1"/>
<dbReference type="InParanoid" id="P93046"/>
<dbReference type="OMA" id="PKIHRIY"/>
<dbReference type="PhylomeDB" id="P93046"/>
<dbReference type="BioCyc" id="ARA:AT3G44990-MONOMER"/>
<dbReference type="BRENDA" id="2.4.1.207">
    <property type="organism ID" value="399"/>
</dbReference>
<dbReference type="BRENDA" id="3.2.1.151">
    <property type="organism ID" value="399"/>
</dbReference>
<dbReference type="SABIO-RK" id="P93046"/>
<dbReference type="PRO" id="PR:P93046"/>
<dbReference type="Proteomes" id="UP000006548">
    <property type="component" value="Chromosome 3"/>
</dbReference>
<dbReference type="ExpressionAtlas" id="P93046">
    <property type="expression patterns" value="baseline and differential"/>
</dbReference>
<dbReference type="GO" id="GO:0048046">
    <property type="term" value="C:apoplast"/>
    <property type="evidence" value="ECO:0007669"/>
    <property type="project" value="UniProtKB-SubCell"/>
</dbReference>
<dbReference type="GO" id="GO:0005886">
    <property type="term" value="C:plasma membrane"/>
    <property type="evidence" value="ECO:0007669"/>
    <property type="project" value="UniProtKB-SubCell"/>
</dbReference>
<dbReference type="GO" id="GO:0030247">
    <property type="term" value="F:polysaccharide binding"/>
    <property type="evidence" value="ECO:0000250"/>
    <property type="project" value="UniProtKB"/>
</dbReference>
<dbReference type="GO" id="GO:0033946">
    <property type="term" value="F:xyloglucan-specific endo-beta-1,4-glucanase activity"/>
    <property type="evidence" value="ECO:0000314"/>
    <property type="project" value="TAIR"/>
</dbReference>
<dbReference type="GO" id="GO:0016762">
    <property type="term" value="F:xyloglucan:xyloglucosyl transferase activity"/>
    <property type="evidence" value="ECO:0007669"/>
    <property type="project" value="UniProtKB-EC"/>
</dbReference>
<dbReference type="GO" id="GO:0042546">
    <property type="term" value="P:cell wall biogenesis"/>
    <property type="evidence" value="ECO:0007669"/>
    <property type="project" value="InterPro"/>
</dbReference>
<dbReference type="GO" id="GO:0016998">
    <property type="term" value="P:cell wall macromolecule catabolic process"/>
    <property type="evidence" value="ECO:0000315"/>
    <property type="project" value="TAIR"/>
</dbReference>
<dbReference type="GO" id="GO:0071555">
    <property type="term" value="P:cell wall organization"/>
    <property type="evidence" value="ECO:0007669"/>
    <property type="project" value="UniProtKB-KW"/>
</dbReference>
<dbReference type="GO" id="GO:0010411">
    <property type="term" value="P:xyloglucan metabolic process"/>
    <property type="evidence" value="ECO:0007669"/>
    <property type="project" value="InterPro"/>
</dbReference>
<dbReference type="FunFam" id="2.60.120.200:FF:000025">
    <property type="entry name" value="Xyloglucan endotransglucosylase/hydrolase"/>
    <property type="match status" value="1"/>
</dbReference>
<dbReference type="Gene3D" id="2.60.120.200">
    <property type="match status" value="1"/>
</dbReference>
<dbReference type="InterPro" id="IPR044791">
    <property type="entry name" value="Beta-glucanase/XTH"/>
</dbReference>
<dbReference type="InterPro" id="IPR013320">
    <property type="entry name" value="ConA-like_dom_sf"/>
</dbReference>
<dbReference type="InterPro" id="IPR000757">
    <property type="entry name" value="GH16"/>
</dbReference>
<dbReference type="InterPro" id="IPR010713">
    <property type="entry name" value="XET_C"/>
</dbReference>
<dbReference type="InterPro" id="IPR016455">
    <property type="entry name" value="XTH"/>
</dbReference>
<dbReference type="PANTHER" id="PTHR31062">
    <property type="entry name" value="XYLOGLUCAN ENDOTRANSGLUCOSYLASE/HYDROLASE PROTEIN 8-RELATED"/>
    <property type="match status" value="1"/>
</dbReference>
<dbReference type="Pfam" id="PF00722">
    <property type="entry name" value="Glyco_hydro_16"/>
    <property type="match status" value="1"/>
</dbReference>
<dbReference type="Pfam" id="PF06955">
    <property type="entry name" value="XET_C"/>
    <property type="match status" value="1"/>
</dbReference>
<dbReference type="PIRSF" id="PIRSF005604">
    <property type="entry name" value="XET"/>
    <property type="match status" value="1"/>
</dbReference>
<dbReference type="SUPFAM" id="SSF49899">
    <property type="entry name" value="Concanavalin A-like lectins/glucanases"/>
    <property type="match status" value="1"/>
</dbReference>
<dbReference type="PROSITE" id="PS51762">
    <property type="entry name" value="GH16_2"/>
    <property type="match status" value="1"/>
</dbReference>
<protein>
    <recommendedName>
        <fullName evidence="12">Xyloglucan endotransglucosylase/hydrolase protein 31</fullName>
        <shortName evidence="12">At-XTH31</shortName>
        <shortName>AtXTR8</shortName>
        <shortName>XTH-31</shortName>
        <ecNumber evidence="7">2.4.1.207</ecNumber>
        <ecNumber evidence="7">3.2.1.151</ecNumber>
    </recommendedName>
</protein>
<gene>
    <name evidence="12" type="primary">XTH31</name>
    <name type="synonym">ATXG</name>
    <name type="synonym">XTR8</name>
    <name type="ordered locus">At3g44990</name>
    <name type="ORF">F14D17.60</name>
</gene>
<accession>P93046</accession>
<accession>Q9LXH6</accession>
<organism>
    <name type="scientific">Arabidopsis thaliana</name>
    <name type="common">Mouse-ear cress</name>
    <dbReference type="NCBI Taxonomy" id="3702"/>
    <lineage>
        <taxon>Eukaryota</taxon>
        <taxon>Viridiplantae</taxon>
        <taxon>Streptophyta</taxon>
        <taxon>Embryophyta</taxon>
        <taxon>Tracheophyta</taxon>
        <taxon>Spermatophyta</taxon>
        <taxon>Magnoliopsida</taxon>
        <taxon>eudicotyledons</taxon>
        <taxon>Gunneridae</taxon>
        <taxon>Pentapetalae</taxon>
        <taxon>rosids</taxon>
        <taxon>malvids</taxon>
        <taxon>Brassicales</taxon>
        <taxon>Brassicaceae</taxon>
        <taxon>Camelineae</taxon>
        <taxon>Arabidopsis</taxon>
    </lineage>
</organism>
<comment type="function">
    <text evidence="7 8 10">Catalyzes xyloglucan endohydrolysis (XEH) and/or endotransglycosylation (XET). Cleaves and religates xyloglucan polymers, an essential constituent of the primary cell wall, and thereby participates in cell wall construction of growing tissues. Involved in the accumulation of hemicelluloses. Has a high XEH activity and only a slight XET activity in vitro, but the main in planta activity seems to be XET, thus controlling aluminum sensitivity (PubMed:23104861, PubMed:23204407, PubMed:25446234). Acceptor preferences are XXXGol = XXFGol &gt; XXLGol &gt; XLLGol = XLFGol (PubMed:25446234).</text>
</comment>
<comment type="catalytic activity">
    <reaction evidence="7">
        <text>breaks a beta-(1-&gt;4) bond in the backbone of a xyloglucan and transfers the xyloglucanyl segment on to O-4 of the non-reducing terminal glucose residue of an acceptor, which can be a xyloglucan or an oligosaccharide of xyloglucan.</text>
        <dbReference type="EC" id="2.4.1.207"/>
    </reaction>
</comment>
<comment type="catalytic activity">
    <reaction evidence="7 10">
        <text>xyloglucan + H2O = xyloglucan oligosaccharides.</text>
        <dbReference type="EC" id="3.2.1.151"/>
    </reaction>
</comment>
<comment type="biophysicochemical properties">
    <kinetics>
        <KM evidence="10">86 uM for XXXGol</KM>
        <text evidence="10">KM for xyloglucan as donor substrate is 1.6 mg/ml. KM is quoted in mg/ml, not uM, because XTHs are able to utilise any segment of the polysaccharide chain equally well, not just one site per molecule as with the acceptor.</text>
    </kinetics>
    <phDependence>
        <text evidence="7 10">Optimum pH is 5 for the XET activity. Optimum pH is 4.5 - 4.75 for the XEH activity.</text>
    </phDependence>
</comment>
<comment type="subunit">
    <text evidence="9">Interacts with XTH17. The formation of an XTH17-XTH31 dimer may be required for XET activity.</text>
</comment>
<comment type="subcellular location">
    <subcellularLocation>
        <location evidence="13">Secreted</location>
        <location evidence="13">Cell wall</location>
    </subcellularLocation>
    <subcellularLocation>
        <location evidence="13">Secreted</location>
        <location evidence="13">Extracellular space</location>
        <location evidence="13">Apoplast</location>
    </subcellularLocation>
    <subcellularLocation>
        <location evidence="8">Cell membrane</location>
    </subcellularLocation>
</comment>
<comment type="tissue specificity">
    <text evidence="5 7 8 11">Predominantly expressed in root (PubMed:11673616, Ref.1). Weakly expressed in influorescence stems (PubMed:11673616). Expressed in root tips and elongation zones, stems, young leaves, flowers and siliques (PubMed:23204407). Expressed in root, hypocotyl, and etiolated whole seedlings (PubMed:23104861).</text>
</comment>
<comment type="developmental stage">
    <text evidence="11">Expressed in germinating seeds from 24 hours after imbibation, and reaches a maximum level at 72 hours. After 96 hours, it then decreases.</text>
</comment>
<comment type="induction">
    <text evidence="6 8 11 13">Up-regulated by gibberellins (Probable). Not induced by auxin (Ref.1). Down-regulated by aluminum (PubMed:21285327, PubMed:23204407).</text>
</comment>
<comment type="PTM">
    <text evidence="1">Contains at least one intrachain disulfide bond essential for its enzymatic activity.</text>
</comment>
<comment type="disruption phenotype">
    <text evidence="7 8">Reduced growth, decreased cell wall xyloglucan content and increased aluminum resistance (PubMed:23204407). No visible phenotype under normal growth conditions (PubMed:23104861).</text>
</comment>
<comment type="miscellaneous">
    <text>In contrast to group 1 and group 2 endotransglucosylase/hydrolase proteins, it may not contain the ligase activity, and may catalyze endohydrolysis xyloglucan polymers only.</text>
</comment>
<comment type="similarity">
    <text evidence="13">Belongs to the glycosyl hydrolase 16 family. XTH group 3 subfamily.</text>
</comment>
<feature type="signal peptide" evidence="3">
    <location>
        <begin position="1"/>
        <end position="20"/>
    </location>
</feature>
<feature type="chain" id="PRO_0000011831" description="Xyloglucan endotransglucosylase/hydrolase protein 31">
    <location>
        <begin position="21"/>
        <end position="293"/>
    </location>
</feature>
<feature type="domain" description="GH16" evidence="4">
    <location>
        <begin position="29"/>
        <end position="230"/>
    </location>
</feature>
<feature type="active site" description="Nucleophile" evidence="2">
    <location>
        <position position="114"/>
    </location>
</feature>
<feature type="active site" description="Proton donor" evidence="2">
    <location>
        <position position="118"/>
    </location>
</feature>
<feature type="binding site" evidence="2">
    <location>
        <position position="118"/>
    </location>
    <ligand>
        <name>xyloglucan</name>
        <dbReference type="ChEBI" id="CHEBI:18233"/>
    </ligand>
</feature>
<feature type="binding site" evidence="2">
    <location>
        <begin position="131"/>
        <end position="133"/>
    </location>
    <ligand>
        <name>xyloglucan</name>
        <dbReference type="ChEBI" id="CHEBI:18233"/>
    </ligand>
</feature>
<feature type="binding site" evidence="2">
    <location>
        <begin position="141"/>
        <end position="148"/>
    </location>
    <ligand>
        <name>xyloglucan</name>
        <dbReference type="ChEBI" id="CHEBI:18233"/>
    </ligand>
</feature>
<feature type="binding site" evidence="2">
    <location>
        <begin position="209"/>
        <end position="210"/>
    </location>
    <ligand>
        <name>xyloglucan</name>
        <dbReference type="ChEBI" id="CHEBI:18233"/>
    </ligand>
</feature>
<feature type="binding site" evidence="2">
    <location>
        <position position="285"/>
    </location>
    <ligand>
        <name>xyloglucan</name>
        <dbReference type="ChEBI" id="CHEBI:18233"/>
    </ligand>
</feature>
<feature type="site" description="Important for catalytic activity" evidence="2">
    <location>
        <position position="116"/>
    </location>
</feature>
<feature type="disulfide bond" evidence="2">
    <location>
        <begin position="238"/>
        <end position="246"/>
    </location>
</feature>
<feature type="disulfide bond" evidence="2">
    <location>
        <begin position="280"/>
        <end position="293"/>
    </location>
</feature>
<feature type="sequence conflict" description="In Ref. 1; CAA63553." evidence="13" ref="1">
    <original>L</original>
    <variation>V</variation>
    <location>
        <position position="11"/>
    </location>
</feature>
<feature type="sequence conflict" description="In Ref. 1; CAA63553." evidence="13" ref="1">
    <original>S</original>
    <variation>T</variation>
    <location>
        <position position="260"/>
    </location>
</feature>
<proteinExistence type="evidence at protein level"/>
<sequence>MALSLIFLALLVLCPSSGHSQRSPSPGYYPSSRVPTSPFDREFRTLWGSQHQRREQDVVTLWLDKSTGSGFKSLRPYRSGYFGASIKLQPGFTAGVDTSLYLSNNQEHPGDHDEVDIEFLGTTPGKPYSLQTNVFVRGSGDRNVIGREMKFTLWFDPTQDFHHYAILWNPNQIVFFVDDVPIRTYNRKNEAIFPTRPMWVYGSIWDASDWATENGRIKADYRYQPFVAKYKNFKLAGCTADSSSSCRPPSPAPMRNRGLSRQQMAALTWAQRNFLVYNYCHDPKRDHTQTPEC</sequence>
<keyword id="KW-0052">Apoplast</keyword>
<keyword id="KW-1003">Cell membrane</keyword>
<keyword id="KW-0134">Cell wall</keyword>
<keyword id="KW-0961">Cell wall biogenesis/degradation</keyword>
<keyword id="KW-1015">Disulfide bond</keyword>
<keyword id="KW-0326">Glycosidase</keyword>
<keyword id="KW-0378">Hydrolase</keyword>
<keyword id="KW-0472">Membrane</keyword>
<keyword id="KW-1185">Reference proteome</keyword>
<keyword id="KW-0964">Secreted</keyword>
<keyword id="KW-0732">Signal</keyword>
<keyword id="KW-0808">Transferase</keyword>
<evidence type="ECO:0000250" key="1"/>
<evidence type="ECO:0000250" key="2">
    <source>
        <dbReference type="UniProtKB" id="Q8GZD5"/>
    </source>
</evidence>
<evidence type="ECO:0000255" key="3"/>
<evidence type="ECO:0000255" key="4">
    <source>
        <dbReference type="PROSITE-ProRule" id="PRU01098"/>
    </source>
</evidence>
<evidence type="ECO:0000269" key="5">
    <source>
    </source>
</evidence>
<evidence type="ECO:0000269" key="6">
    <source>
    </source>
</evidence>
<evidence type="ECO:0000269" key="7">
    <source>
    </source>
</evidence>
<evidence type="ECO:0000269" key="8">
    <source>
    </source>
</evidence>
<evidence type="ECO:0000269" key="9">
    <source>
    </source>
</evidence>
<evidence type="ECO:0000269" key="10">
    <source>
    </source>
</evidence>
<evidence type="ECO:0000269" key="11">
    <source ref="1"/>
</evidence>
<evidence type="ECO:0000303" key="12">
    <source>
    </source>
</evidence>
<evidence type="ECO:0000305" key="13"/>
<name>XTH31_ARATH</name>
<reference key="1">
    <citation type="journal article" date="1996" name="Plant Sci.">
        <title>A new cDNA encoding a xyloglucan endo-transglycosylase-related polypeptide (AtXTR8) preferentially expressed in seedling, root and stem of Arabidopsis thaliana.</title>
        <authorList>
            <person name="Aubert D."/>
            <person name="Herzog M."/>
        </authorList>
    </citation>
    <scope>NUCLEOTIDE SEQUENCE [MRNA]</scope>
    <scope>TISSUE SPECIFICITY</scope>
    <scope>DEVELOPMENTAL STAGE</scope>
    <scope>INDUCTION</scope>
    <source>
        <tissue>Seed</tissue>
    </source>
</reference>
<reference key="2">
    <citation type="journal article" date="2000" name="Nature">
        <title>Sequence and analysis of chromosome 3 of the plant Arabidopsis thaliana.</title>
        <authorList>
            <person name="Salanoubat M."/>
            <person name="Lemcke K."/>
            <person name="Rieger M."/>
            <person name="Ansorge W."/>
            <person name="Unseld M."/>
            <person name="Fartmann B."/>
            <person name="Valle G."/>
            <person name="Bloecker H."/>
            <person name="Perez-Alonso M."/>
            <person name="Obermaier B."/>
            <person name="Delseny M."/>
            <person name="Boutry M."/>
            <person name="Grivell L.A."/>
            <person name="Mache R."/>
            <person name="Puigdomenech P."/>
            <person name="De Simone V."/>
            <person name="Choisne N."/>
            <person name="Artiguenave F."/>
            <person name="Robert C."/>
            <person name="Brottier P."/>
            <person name="Wincker P."/>
            <person name="Cattolico L."/>
            <person name="Weissenbach J."/>
            <person name="Saurin W."/>
            <person name="Quetier F."/>
            <person name="Schaefer M."/>
            <person name="Mueller-Auer S."/>
            <person name="Gabel C."/>
            <person name="Fuchs M."/>
            <person name="Benes V."/>
            <person name="Wurmbach E."/>
            <person name="Drzonek H."/>
            <person name="Erfle H."/>
            <person name="Jordan N."/>
            <person name="Bangert S."/>
            <person name="Wiedelmann R."/>
            <person name="Kranz H."/>
            <person name="Voss H."/>
            <person name="Holland R."/>
            <person name="Brandt P."/>
            <person name="Nyakatura G."/>
            <person name="Vezzi A."/>
            <person name="D'Angelo M."/>
            <person name="Pallavicini A."/>
            <person name="Toppo S."/>
            <person name="Simionati B."/>
            <person name="Conrad A."/>
            <person name="Hornischer K."/>
            <person name="Kauer G."/>
            <person name="Loehnert T.-H."/>
            <person name="Nordsiek G."/>
            <person name="Reichelt J."/>
            <person name="Scharfe M."/>
            <person name="Schoen O."/>
            <person name="Bargues M."/>
            <person name="Terol J."/>
            <person name="Climent J."/>
            <person name="Navarro P."/>
            <person name="Collado C."/>
            <person name="Perez-Perez A."/>
            <person name="Ottenwaelder B."/>
            <person name="Duchemin D."/>
            <person name="Cooke R."/>
            <person name="Laudie M."/>
            <person name="Berger-Llauro C."/>
            <person name="Purnelle B."/>
            <person name="Masuy D."/>
            <person name="de Haan M."/>
            <person name="Maarse A.C."/>
            <person name="Alcaraz J.-P."/>
            <person name="Cottet A."/>
            <person name="Casacuberta E."/>
            <person name="Monfort A."/>
            <person name="Argiriou A."/>
            <person name="Flores M."/>
            <person name="Liguori R."/>
            <person name="Vitale D."/>
            <person name="Mannhaupt G."/>
            <person name="Haase D."/>
            <person name="Schoof H."/>
            <person name="Rudd S."/>
            <person name="Zaccaria P."/>
            <person name="Mewes H.-W."/>
            <person name="Mayer K.F.X."/>
            <person name="Kaul S."/>
            <person name="Town C.D."/>
            <person name="Koo H.L."/>
            <person name="Tallon L.J."/>
            <person name="Jenkins J."/>
            <person name="Rooney T."/>
            <person name="Rizzo M."/>
            <person name="Walts A."/>
            <person name="Utterback T."/>
            <person name="Fujii C.Y."/>
            <person name="Shea T.P."/>
            <person name="Creasy T.H."/>
            <person name="Haas B."/>
            <person name="Maiti R."/>
            <person name="Wu D."/>
            <person name="Peterson J."/>
            <person name="Van Aken S."/>
            <person name="Pai G."/>
            <person name="Militscher J."/>
            <person name="Sellers P."/>
            <person name="Gill J.E."/>
            <person name="Feldblyum T.V."/>
            <person name="Preuss D."/>
            <person name="Lin X."/>
            <person name="Nierman W.C."/>
            <person name="Salzberg S.L."/>
            <person name="White O."/>
            <person name="Venter J.C."/>
            <person name="Fraser C.M."/>
            <person name="Kaneko T."/>
            <person name="Nakamura Y."/>
            <person name="Sato S."/>
            <person name="Kato T."/>
            <person name="Asamizu E."/>
            <person name="Sasamoto S."/>
            <person name="Kimura T."/>
            <person name="Idesawa K."/>
            <person name="Kawashima K."/>
            <person name="Kishida Y."/>
            <person name="Kiyokawa C."/>
            <person name="Kohara M."/>
            <person name="Matsumoto M."/>
            <person name="Matsuno A."/>
            <person name="Muraki A."/>
            <person name="Nakayama S."/>
            <person name="Nakazaki N."/>
            <person name="Shinpo S."/>
            <person name="Takeuchi C."/>
            <person name="Wada T."/>
            <person name="Watanabe A."/>
            <person name="Yamada M."/>
            <person name="Yasuda M."/>
            <person name="Tabata S."/>
        </authorList>
    </citation>
    <scope>NUCLEOTIDE SEQUENCE [LARGE SCALE GENOMIC DNA]</scope>
    <source>
        <strain>cv. Columbia</strain>
    </source>
</reference>
<reference key="3">
    <citation type="journal article" date="2017" name="Plant J.">
        <title>Araport11: a complete reannotation of the Arabidopsis thaliana reference genome.</title>
        <authorList>
            <person name="Cheng C.Y."/>
            <person name="Krishnakumar V."/>
            <person name="Chan A.P."/>
            <person name="Thibaud-Nissen F."/>
            <person name="Schobel S."/>
            <person name="Town C.D."/>
        </authorList>
    </citation>
    <scope>GENOME REANNOTATION</scope>
    <source>
        <strain>cv. Columbia</strain>
    </source>
</reference>
<reference key="4">
    <citation type="journal article" date="2003" name="Science">
        <title>Empirical analysis of transcriptional activity in the Arabidopsis genome.</title>
        <authorList>
            <person name="Yamada K."/>
            <person name="Lim J."/>
            <person name="Dale J.M."/>
            <person name="Chen H."/>
            <person name="Shinn P."/>
            <person name="Palm C.J."/>
            <person name="Southwick A.M."/>
            <person name="Wu H.C."/>
            <person name="Kim C.J."/>
            <person name="Nguyen M."/>
            <person name="Pham P.K."/>
            <person name="Cheuk R.F."/>
            <person name="Karlin-Newmann G."/>
            <person name="Liu S.X."/>
            <person name="Lam B."/>
            <person name="Sakano H."/>
            <person name="Wu T."/>
            <person name="Yu G."/>
            <person name="Miranda M."/>
            <person name="Quach H.L."/>
            <person name="Tripp M."/>
            <person name="Chang C.H."/>
            <person name="Lee J.M."/>
            <person name="Toriumi M.J."/>
            <person name="Chan M.M."/>
            <person name="Tang C.C."/>
            <person name="Onodera C.S."/>
            <person name="Deng J.M."/>
            <person name="Akiyama K."/>
            <person name="Ansari Y."/>
            <person name="Arakawa T."/>
            <person name="Banh J."/>
            <person name="Banno F."/>
            <person name="Bowser L."/>
            <person name="Brooks S.Y."/>
            <person name="Carninci P."/>
            <person name="Chao Q."/>
            <person name="Choy N."/>
            <person name="Enju A."/>
            <person name="Goldsmith A.D."/>
            <person name="Gurjal M."/>
            <person name="Hansen N.F."/>
            <person name="Hayashizaki Y."/>
            <person name="Johnson-Hopson C."/>
            <person name="Hsuan V.W."/>
            <person name="Iida K."/>
            <person name="Karnes M."/>
            <person name="Khan S."/>
            <person name="Koesema E."/>
            <person name="Ishida J."/>
            <person name="Jiang P.X."/>
            <person name="Jones T."/>
            <person name="Kawai J."/>
            <person name="Kamiya A."/>
            <person name="Meyers C."/>
            <person name="Nakajima M."/>
            <person name="Narusaka M."/>
            <person name="Seki M."/>
            <person name="Sakurai T."/>
            <person name="Satou M."/>
            <person name="Tamse R."/>
            <person name="Vaysberg M."/>
            <person name="Wallender E.K."/>
            <person name="Wong C."/>
            <person name="Yamamura Y."/>
            <person name="Yuan S."/>
            <person name="Shinozaki K."/>
            <person name="Davis R.W."/>
            <person name="Theologis A."/>
            <person name="Ecker J.R."/>
        </authorList>
    </citation>
    <scope>NUCLEOTIDE SEQUENCE [LARGE SCALE MRNA]</scope>
    <source>
        <strain>cv. Columbia</strain>
    </source>
</reference>
<reference key="5">
    <citation type="journal article" date="2001" name="Plant Cell Physiol.">
        <title>A comprehensive expression analysis of all members of a gene family encoding cell-wall enzymes allowed us to predict cis-regulatory regions involved in cell-wall construction in specific organs of Arabidopsis.</title>
        <authorList>
            <person name="Yokoyama R."/>
            <person name="Nishitani K."/>
        </authorList>
    </citation>
    <scope>TISSUE SPECIFICITY</scope>
</reference>
<reference key="6">
    <citation type="journal article" date="2002" name="Plant Cell Physiol.">
        <title>The XTH family of enzymes involved in xyloglucan endotransglucosylation and endohydrolysis: current perspectives and a new unifying nomenclature.</title>
        <authorList>
            <person name="Rose J.K.C."/>
            <person name="Braam J."/>
            <person name="Fry S.C."/>
            <person name="Nishitani K."/>
        </authorList>
    </citation>
    <scope>NOMENCLATURE</scope>
</reference>
<reference key="7">
    <citation type="journal article" date="2011" name="Plant Physiol.">
        <title>Cell wall hemicellulose contributes significantly to aluminum adsorption and root growth in Arabidopsis.</title>
        <authorList>
            <person name="Yang J.L."/>
            <person name="Zhu X.F."/>
            <person name="Peng Y.X."/>
            <person name="Zheng C."/>
            <person name="Li G.X."/>
            <person name="Liu Y."/>
            <person name="Shi Y.Z."/>
            <person name="Zheng S.J."/>
        </authorList>
    </citation>
    <scope>INDUCTION BY ALUMINUM</scope>
</reference>
<reference key="8">
    <citation type="journal article" date="2012" name="Plant Cell">
        <title>XTH31, encoding an in vitro XEH/XET-active enzyme, regulates aluminum sensitivity by modulating in vivo XET action, cell wall xyloglucan content, and aluminum binding capacity in Arabidopsis.</title>
        <authorList>
            <person name="Zhu X.F."/>
            <person name="Shi Y.Z."/>
            <person name="Lei G.J."/>
            <person name="Fry S.C."/>
            <person name="Zhang B.C."/>
            <person name="Zhou Y.H."/>
            <person name="Braam J."/>
            <person name="Jiang T."/>
            <person name="Xu X.Y."/>
            <person name="Mao C.Z."/>
            <person name="Pan Y.J."/>
            <person name="Yang J.L."/>
            <person name="Wu P."/>
            <person name="Zheng S.J."/>
        </authorList>
    </citation>
    <scope>FUNCTION</scope>
    <scope>DISRUPTION PHENOTYPE</scope>
    <scope>SUBCELLULAR LOCATION</scope>
    <scope>TISSUE SPECIFICITY</scope>
    <scope>INDUCTION BY ALUMINUM</scope>
</reference>
<reference key="9">
    <citation type="journal article" date="2013" name="Plant Physiol.">
        <title>Group III-A XTH genes of Arabidopsis encode predominant xyloglucan endohydrolases that are dispensable for normal growth.</title>
        <authorList>
            <person name="Kaewthai N."/>
            <person name="Gendre D."/>
            <person name="Eklof J.M."/>
            <person name="Ibatullin F.M."/>
            <person name="Ezcurra I."/>
            <person name="Bhalerao R.P."/>
            <person name="Brumer H."/>
        </authorList>
    </citation>
    <scope>CATALYTIC ACTIVITY</scope>
    <scope>BIOPHYSICOCHEMICAL PROPERTIES</scope>
    <scope>TISSUE SPECIFICITY</scope>
    <scope>DISRUPTION PHENOTYPE</scope>
</reference>
<reference key="10">
    <citation type="journal article" date="2015" name="Phytochemistry">
        <title>Distinct catalytic capacities of two aluminium-repressed Arabidopsis thaliana xyloglucan endotransglucosylase/hydrolases, XTH15 and XTH31, heterologously produced in Pichia.</title>
        <authorList>
            <person name="Shi Y.Z."/>
            <person name="Zhu X.F."/>
            <person name="Miller J.G."/>
            <person name="Gregson T."/>
            <person name="Zheng S.J."/>
            <person name="Fry S.C."/>
        </authorList>
    </citation>
    <scope>FUNCTION</scope>
    <scope>CATALYTIC ACTIVITY</scope>
    <scope>BIOPHYSICOCHEMICAL PROPERTIES</scope>
</reference>
<reference key="11">
    <citation type="journal article" date="2014" name="Plant Physiol.">
        <title>Xyloglucan endotransglucosylase-hydrolase17 interacts with xyloglucan endotransglucosylase-hydrolase31 to confer xyloglucan endotransglucosylase action and affect aluminum sensitivity in Arabidopsis.</title>
        <authorList>
            <person name="Zhu X.F."/>
            <person name="Wan J.X."/>
            <person name="Sun Y."/>
            <person name="Shi Y.Z."/>
            <person name="Braam J."/>
            <person name="Li G.X."/>
            <person name="Zheng S.J."/>
        </authorList>
    </citation>
    <scope>INTERACTION WITH XTH17</scope>
</reference>